<feature type="chain" id="PRO_1000214095" description="UPF0248 protein LS215_2790">
    <location>
        <begin position="1"/>
        <end position="80"/>
    </location>
</feature>
<evidence type="ECO:0000255" key="1">
    <source>
        <dbReference type="HAMAP-Rule" id="MF_01245"/>
    </source>
</evidence>
<gene>
    <name type="ordered locus">LS215_2790</name>
</gene>
<accession>C3MMK8</accession>
<name>Y2790_SACI2</name>
<proteinExistence type="inferred from homology"/>
<sequence>MKIKDAVNMIRWEYREKIDDYVIIIIDRLTENGLKEISFSELDAVDNNYLYLKSEENTVIPLHRVLMIKRKSDNALIWKR</sequence>
<protein>
    <recommendedName>
        <fullName evidence="1">UPF0248 protein LS215_2790</fullName>
    </recommendedName>
</protein>
<reference key="1">
    <citation type="journal article" date="2009" name="Proc. Natl. Acad. Sci. U.S.A.">
        <title>Biogeography of the Sulfolobus islandicus pan-genome.</title>
        <authorList>
            <person name="Reno M.L."/>
            <person name="Held N.L."/>
            <person name="Fields C.J."/>
            <person name="Burke P.V."/>
            <person name="Whitaker R.J."/>
        </authorList>
    </citation>
    <scope>NUCLEOTIDE SEQUENCE [LARGE SCALE GENOMIC DNA]</scope>
    <source>
        <strain>L.S.2.15 / Lassen #1</strain>
    </source>
</reference>
<dbReference type="EMBL" id="CP001399">
    <property type="protein sequence ID" value="ACP36725.1"/>
    <property type="molecule type" value="Genomic_DNA"/>
</dbReference>
<dbReference type="RefSeq" id="WP_012714583.1">
    <property type="nucleotide sequence ID" value="NC_012589.1"/>
</dbReference>
<dbReference type="GeneID" id="7807750"/>
<dbReference type="KEGG" id="sis:LS215_2790"/>
<dbReference type="HOGENOM" id="CLU_172276_0_0_2"/>
<dbReference type="OrthoDB" id="14794at2157"/>
<dbReference type="Proteomes" id="UP000001747">
    <property type="component" value="Chromosome"/>
</dbReference>
<dbReference type="HAMAP" id="MF_01245">
    <property type="entry name" value="UPF0248"/>
    <property type="match status" value="1"/>
</dbReference>
<dbReference type="InterPro" id="IPR040459">
    <property type="entry name" value="MJ1316"/>
</dbReference>
<dbReference type="InterPro" id="IPR007547">
    <property type="entry name" value="UPF0248"/>
</dbReference>
<dbReference type="Pfam" id="PF04457">
    <property type="entry name" value="MJ1316"/>
    <property type="match status" value="1"/>
</dbReference>
<comment type="similarity">
    <text evidence="1">Belongs to the UPF0248 family.</text>
</comment>
<organism>
    <name type="scientific">Saccharolobus islandicus (strain L.S.2.15 / Lassen #1)</name>
    <name type="common">Sulfolobus islandicus</name>
    <dbReference type="NCBI Taxonomy" id="429572"/>
    <lineage>
        <taxon>Archaea</taxon>
        <taxon>Thermoproteota</taxon>
        <taxon>Thermoprotei</taxon>
        <taxon>Sulfolobales</taxon>
        <taxon>Sulfolobaceae</taxon>
        <taxon>Saccharolobus</taxon>
    </lineage>
</organism>